<dbReference type="EC" id="1.10.3.9" evidence="1"/>
<dbReference type="EMBL" id="AY958085">
    <property type="protein sequence ID" value="AAX45721.1"/>
    <property type="molecule type" value="Genomic_DNA"/>
</dbReference>
<dbReference type="RefSeq" id="YP_636405.1">
    <property type="nucleotide sequence ID" value="NC_008116.1"/>
</dbReference>
<dbReference type="SMR" id="Q32RX1"/>
<dbReference type="GeneID" id="4108680"/>
<dbReference type="GO" id="GO:0009535">
    <property type="term" value="C:chloroplast thylakoid membrane"/>
    <property type="evidence" value="ECO:0007669"/>
    <property type="project" value="UniProtKB-SubCell"/>
</dbReference>
<dbReference type="GO" id="GO:0009523">
    <property type="term" value="C:photosystem II"/>
    <property type="evidence" value="ECO:0007669"/>
    <property type="project" value="UniProtKB-KW"/>
</dbReference>
<dbReference type="GO" id="GO:0016168">
    <property type="term" value="F:chlorophyll binding"/>
    <property type="evidence" value="ECO:0007669"/>
    <property type="project" value="UniProtKB-UniRule"/>
</dbReference>
<dbReference type="GO" id="GO:0045156">
    <property type="term" value="F:electron transporter, transferring electrons within the cyclic electron transport pathway of photosynthesis activity"/>
    <property type="evidence" value="ECO:0007669"/>
    <property type="project" value="InterPro"/>
</dbReference>
<dbReference type="GO" id="GO:0005506">
    <property type="term" value="F:iron ion binding"/>
    <property type="evidence" value="ECO:0007669"/>
    <property type="project" value="UniProtKB-UniRule"/>
</dbReference>
<dbReference type="GO" id="GO:0016682">
    <property type="term" value="F:oxidoreductase activity, acting on diphenols and related substances as donors, oxygen as acceptor"/>
    <property type="evidence" value="ECO:0007669"/>
    <property type="project" value="UniProtKB-UniRule"/>
</dbReference>
<dbReference type="GO" id="GO:0010242">
    <property type="term" value="F:oxygen evolving activity"/>
    <property type="evidence" value="ECO:0007669"/>
    <property type="project" value="UniProtKB-EC"/>
</dbReference>
<dbReference type="GO" id="GO:0009772">
    <property type="term" value="P:photosynthetic electron transport in photosystem II"/>
    <property type="evidence" value="ECO:0007669"/>
    <property type="project" value="InterPro"/>
</dbReference>
<dbReference type="GO" id="GO:0009635">
    <property type="term" value="P:response to herbicide"/>
    <property type="evidence" value="ECO:0007669"/>
    <property type="project" value="UniProtKB-KW"/>
</dbReference>
<dbReference type="CDD" id="cd09289">
    <property type="entry name" value="Photosystem-II_D1"/>
    <property type="match status" value="1"/>
</dbReference>
<dbReference type="FunFam" id="1.20.85.10:FF:000002">
    <property type="entry name" value="Photosystem II protein D1"/>
    <property type="match status" value="1"/>
</dbReference>
<dbReference type="Gene3D" id="1.20.85.10">
    <property type="entry name" value="Photosystem II protein D1-like"/>
    <property type="match status" value="1"/>
</dbReference>
<dbReference type="HAMAP" id="MF_01379">
    <property type="entry name" value="PSII_PsbA_D1"/>
    <property type="match status" value="1"/>
</dbReference>
<dbReference type="InterPro" id="IPR055266">
    <property type="entry name" value="D1/D2"/>
</dbReference>
<dbReference type="InterPro" id="IPR036854">
    <property type="entry name" value="Photo_II_D1/D2_sf"/>
</dbReference>
<dbReference type="InterPro" id="IPR000484">
    <property type="entry name" value="Photo_RC_L/M"/>
</dbReference>
<dbReference type="InterPro" id="IPR055265">
    <property type="entry name" value="Photo_RC_L/M_CS"/>
</dbReference>
<dbReference type="InterPro" id="IPR005867">
    <property type="entry name" value="PSII_D1"/>
</dbReference>
<dbReference type="NCBIfam" id="TIGR01151">
    <property type="entry name" value="psbA"/>
    <property type="match status" value="1"/>
</dbReference>
<dbReference type="PANTHER" id="PTHR33149:SF12">
    <property type="entry name" value="PHOTOSYSTEM II D2 PROTEIN"/>
    <property type="match status" value="1"/>
</dbReference>
<dbReference type="PANTHER" id="PTHR33149">
    <property type="entry name" value="PHOTOSYSTEM II PROTEIN D1"/>
    <property type="match status" value="1"/>
</dbReference>
<dbReference type="Pfam" id="PF00124">
    <property type="entry name" value="Photo_RC"/>
    <property type="match status" value="1"/>
</dbReference>
<dbReference type="PRINTS" id="PR00256">
    <property type="entry name" value="REACTNCENTRE"/>
</dbReference>
<dbReference type="SUPFAM" id="SSF81483">
    <property type="entry name" value="Bacterial photosystem II reaction centre, L and M subunits"/>
    <property type="match status" value="1"/>
</dbReference>
<dbReference type="PROSITE" id="PS00244">
    <property type="entry name" value="REACTION_CENTER"/>
    <property type="match status" value="1"/>
</dbReference>
<geneLocation type="chloroplast"/>
<accession>Q32RX1</accession>
<protein>
    <recommendedName>
        <fullName evidence="1">Photosystem II protein D1</fullName>
        <shortName evidence="1">PSII D1 protein</shortName>
        <ecNumber evidence="1">1.10.3.9</ecNumber>
    </recommendedName>
    <alternativeName>
        <fullName evidence="1">Photosystem II Q(B) protein</fullName>
    </alternativeName>
</protein>
<comment type="function">
    <text evidence="1">Photosystem II (PSII) is a light-driven water:plastoquinone oxidoreductase that uses light energy to abstract electrons from H(2)O, generating O(2) and a proton gradient subsequently used for ATP formation. It consists of a core antenna complex that captures photons, and an electron transfer chain that converts photonic excitation into a charge separation. The D1/D2 (PsbA/PsbD) reaction center heterodimer binds P680, the primary electron donor of PSII as well as several subsequent electron acceptors.</text>
</comment>
<comment type="catalytic activity">
    <reaction evidence="1">
        <text>2 a plastoquinone + 4 hnu + 2 H2O = 2 a plastoquinol + O2</text>
        <dbReference type="Rhea" id="RHEA:36359"/>
        <dbReference type="Rhea" id="RHEA-COMP:9561"/>
        <dbReference type="Rhea" id="RHEA-COMP:9562"/>
        <dbReference type="ChEBI" id="CHEBI:15377"/>
        <dbReference type="ChEBI" id="CHEBI:15379"/>
        <dbReference type="ChEBI" id="CHEBI:17757"/>
        <dbReference type="ChEBI" id="CHEBI:30212"/>
        <dbReference type="ChEBI" id="CHEBI:62192"/>
        <dbReference type="EC" id="1.10.3.9"/>
    </reaction>
</comment>
<comment type="cofactor">
    <text evidence="1">The D1/D2 heterodimer binds P680, chlorophylls that are the primary electron donor of PSII, and subsequent electron acceptors. It shares a non-heme iron and each subunit binds pheophytin, quinone, additional chlorophylls, carotenoids and lipids. D1 provides most of the ligands for the Mn4-Ca-O5 cluster of the oxygen-evolving complex (OEC). There is also a Cl(-1) ion associated with D1 and D2, which is required for oxygen evolution. The PSII complex binds additional chlorophylls, carotenoids and specific lipids.</text>
</comment>
<comment type="subunit">
    <text evidence="1">PSII is composed of 1 copy each of membrane proteins PsbA, PsbB, PsbC, PsbD, PsbE, PsbF, PsbH, PsbI, PsbJ, PsbK, PsbL, PsbM, PsbT, PsbX, PsbY, PsbZ, Psb30/Ycf12, at least 3 peripheral proteins of the oxygen-evolving complex and a large number of cofactors. It forms dimeric complexes.</text>
</comment>
<comment type="subcellular location">
    <subcellularLocation>
        <location evidence="1">Plastid</location>
        <location evidence="1">Chloroplast thylakoid membrane</location>
        <topology evidence="1">Multi-pass membrane protein</topology>
    </subcellularLocation>
</comment>
<comment type="PTM">
    <text evidence="1">Tyr-161 forms a radical intermediate that is referred to as redox-active TyrZ, YZ or Y-Z.</text>
</comment>
<comment type="miscellaneous">
    <text evidence="1">2 of the reaction center chlorophylls (ChlD1 and ChlD2) are entirely coordinated by water.</text>
</comment>
<comment type="miscellaneous">
    <text evidence="1">Herbicides such as atrazine, BNT, diuron or ioxynil bind in the Q(B) binding site and block subsequent electron transfer.</text>
</comment>
<comment type="similarity">
    <text evidence="1">Belongs to the reaction center PufL/M/PsbA/D family.</text>
</comment>
<organism>
    <name type="scientific">Staurastrum punctulatum</name>
    <name type="common">Green alga</name>
    <name type="synonym">Cosmoastrum punctulatum</name>
    <dbReference type="NCBI Taxonomy" id="102822"/>
    <lineage>
        <taxon>Eukaryota</taxon>
        <taxon>Viridiplantae</taxon>
        <taxon>Streptophyta</taxon>
        <taxon>Zygnematophyceae</taxon>
        <taxon>Zygnematophycidae</taxon>
        <taxon>Desmidiales</taxon>
        <taxon>Desmidiaceae</taxon>
        <taxon>Staurastrum</taxon>
    </lineage>
</organism>
<proteinExistence type="inferred from homology"/>
<reference key="1">
    <citation type="journal article" date="2005" name="BMC Biol.">
        <title>The complete chloroplast DNA sequences of the charophycean green algae Staurastrum and Zygnema reveal that the chloroplast genome underwent extensive changes during the evolution of the Zygnematales.</title>
        <authorList>
            <person name="Turmel M."/>
            <person name="Otis C."/>
            <person name="Lemieux C."/>
        </authorList>
    </citation>
    <scope>NUCLEOTIDE SEQUENCE [LARGE SCALE GENOMIC DNA]</scope>
</reference>
<feature type="initiator methionine" description="Removed" evidence="1">
    <location>
        <position position="1"/>
    </location>
</feature>
<feature type="chain" id="PRO_0000340072" description="Photosystem II protein D1" evidence="1">
    <location>
        <begin position="2"/>
        <end position="344"/>
    </location>
</feature>
<feature type="transmembrane region" description="Helical" evidence="1">
    <location>
        <begin position="29"/>
        <end position="46"/>
    </location>
</feature>
<feature type="transmembrane region" description="Helical" evidence="1">
    <location>
        <begin position="118"/>
        <end position="133"/>
    </location>
</feature>
<feature type="transmembrane region" description="Helical" evidence="1">
    <location>
        <begin position="142"/>
        <end position="156"/>
    </location>
</feature>
<feature type="transmembrane region" description="Helical" evidence="1">
    <location>
        <begin position="197"/>
        <end position="218"/>
    </location>
</feature>
<feature type="transmembrane region" description="Helical" evidence="1">
    <location>
        <begin position="274"/>
        <end position="288"/>
    </location>
</feature>
<feature type="binding site" description="axial binding residue" evidence="1">
    <location>
        <position position="118"/>
    </location>
    <ligand>
        <name>chlorophyll a</name>
        <dbReference type="ChEBI" id="CHEBI:58416"/>
        <label>ChlzD1</label>
    </ligand>
    <ligandPart>
        <name>Mg</name>
        <dbReference type="ChEBI" id="CHEBI:25107"/>
    </ligandPart>
</feature>
<feature type="binding site" evidence="1">
    <location>
        <position position="126"/>
    </location>
    <ligand>
        <name>pheophytin a</name>
        <dbReference type="ChEBI" id="CHEBI:136840"/>
        <label>D1</label>
    </ligand>
</feature>
<feature type="binding site" evidence="1">
    <location>
        <position position="170"/>
    </location>
    <ligand>
        <name>[CaMn4O5] cluster</name>
        <dbReference type="ChEBI" id="CHEBI:189552"/>
    </ligand>
</feature>
<feature type="binding site" evidence="1">
    <location>
        <position position="189"/>
    </location>
    <ligand>
        <name>[CaMn4O5] cluster</name>
        <dbReference type="ChEBI" id="CHEBI:189552"/>
    </ligand>
</feature>
<feature type="binding site" description="axial binding residue" evidence="1">
    <location>
        <position position="198"/>
    </location>
    <ligand>
        <name>chlorophyll a</name>
        <dbReference type="ChEBI" id="CHEBI:58416"/>
        <label>PD1</label>
    </ligand>
    <ligandPart>
        <name>Mg</name>
        <dbReference type="ChEBI" id="CHEBI:25107"/>
    </ligandPart>
</feature>
<feature type="binding site" evidence="1">
    <location>
        <position position="215"/>
    </location>
    <ligand>
        <name>a quinone</name>
        <dbReference type="ChEBI" id="CHEBI:132124"/>
        <label>B</label>
    </ligand>
</feature>
<feature type="binding site" evidence="1">
    <location>
        <position position="215"/>
    </location>
    <ligand>
        <name>Fe cation</name>
        <dbReference type="ChEBI" id="CHEBI:24875"/>
        <note>ligand shared with heterodimeric partner</note>
    </ligand>
</feature>
<feature type="binding site" evidence="1">
    <location>
        <begin position="264"/>
        <end position="265"/>
    </location>
    <ligand>
        <name>a quinone</name>
        <dbReference type="ChEBI" id="CHEBI:132124"/>
        <label>B</label>
    </ligand>
</feature>
<feature type="binding site" evidence="1">
    <location>
        <position position="272"/>
    </location>
    <ligand>
        <name>Fe cation</name>
        <dbReference type="ChEBI" id="CHEBI:24875"/>
        <note>ligand shared with heterodimeric partner</note>
    </ligand>
</feature>
<feature type="binding site" evidence="1">
    <location>
        <position position="332"/>
    </location>
    <ligand>
        <name>[CaMn4O5] cluster</name>
        <dbReference type="ChEBI" id="CHEBI:189552"/>
    </ligand>
</feature>
<feature type="binding site" evidence="1">
    <location>
        <position position="333"/>
    </location>
    <ligand>
        <name>[CaMn4O5] cluster</name>
        <dbReference type="ChEBI" id="CHEBI:189552"/>
    </ligand>
</feature>
<feature type="binding site" evidence="1">
    <location>
        <position position="342"/>
    </location>
    <ligand>
        <name>[CaMn4O5] cluster</name>
        <dbReference type="ChEBI" id="CHEBI:189552"/>
    </ligand>
</feature>
<feature type="binding site" evidence="1">
    <location>
        <position position="344"/>
    </location>
    <ligand>
        <name>[CaMn4O5] cluster</name>
        <dbReference type="ChEBI" id="CHEBI:189552"/>
    </ligand>
</feature>
<feature type="site" description="Tyrosine radical intermediate" evidence="1">
    <location>
        <position position="161"/>
    </location>
</feature>
<feature type="site" description="Stabilizes free radical intermediate" evidence="1">
    <location>
        <position position="190"/>
    </location>
</feature>
<feature type="modified residue" description="N-acetylthreonine" evidence="1">
    <location>
        <position position="2"/>
    </location>
</feature>
<feature type="modified residue" description="Phosphothreonine" evidence="1">
    <location>
        <position position="2"/>
    </location>
</feature>
<gene>
    <name evidence="1" type="primary">psbA</name>
</gene>
<name>PSBA_STAPU</name>
<evidence type="ECO:0000255" key="1">
    <source>
        <dbReference type="HAMAP-Rule" id="MF_01379"/>
    </source>
</evidence>
<sequence>MTATLERRESANLWARFCDWITSTENRLYIGWFGVLMFPLLLTATSVFIIAFIAAPPVDIDGIREPVAGSLLYGNNIISGAIVPSSAAIGLHFYPIWEAASVDEWLYNGGPYELIVLHFLLGVACYMGREWELSFRLGMRPWIAVAYSAPVAAATAVFLIYPIGQGSFSDGMPLGISGTFNFMIVFQAEHNILMHPFHMLGVAGVFGGSLFSAMHGSLVTSSLIRETTENESVNSGYKFGQEFETYNIVAAHGYFGRLIFQYASFNNSRSLHFFLAAWPVVCIWFTALGISTMAFNLNGFNFNQSVVDSQGRVINTWADIINRANLGMEVMHERNAHNFPLDLA</sequence>
<keyword id="KW-0007">Acetylation</keyword>
<keyword id="KW-0106">Calcium</keyword>
<keyword id="KW-0148">Chlorophyll</keyword>
<keyword id="KW-0150">Chloroplast</keyword>
<keyword id="KW-0157">Chromophore</keyword>
<keyword id="KW-0249">Electron transport</keyword>
<keyword id="KW-0359">Herbicide resistance</keyword>
<keyword id="KW-0408">Iron</keyword>
<keyword id="KW-0460">Magnesium</keyword>
<keyword id="KW-0464">Manganese</keyword>
<keyword id="KW-0472">Membrane</keyword>
<keyword id="KW-0479">Metal-binding</keyword>
<keyword id="KW-0560">Oxidoreductase</keyword>
<keyword id="KW-0597">Phosphoprotein</keyword>
<keyword id="KW-0602">Photosynthesis</keyword>
<keyword id="KW-0604">Photosystem II</keyword>
<keyword id="KW-0934">Plastid</keyword>
<keyword id="KW-0793">Thylakoid</keyword>
<keyword id="KW-0812">Transmembrane</keyword>
<keyword id="KW-1133">Transmembrane helix</keyword>
<keyword id="KW-0813">Transport</keyword>